<feature type="signal peptide" evidence="2">
    <location>
        <begin position="1"/>
        <end position="26"/>
    </location>
</feature>
<feature type="chain" id="PRO_0000005829" description="Collagen alpha-2(IV) chain">
    <location>
        <begin position="27"/>
        <end position="1758"/>
    </location>
</feature>
<feature type="domain" description="Collagen IV NC1" evidence="3">
    <location>
        <begin position="1531"/>
        <end position="1754"/>
    </location>
</feature>
<feature type="region of interest" description="7S domain">
    <location>
        <begin position="27"/>
        <end position="42"/>
    </location>
</feature>
<feature type="region of interest" description="Triple-helical region">
    <location>
        <begin position="42"/>
        <end position="1527"/>
    </location>
</feature>
<feature type="region of interest" description="Disordered" evidence="4">
    <location>
        <begin position="47"/>
        <end position="943"/>
    </location>
</feature>
<feature type="region of interest" description="Disordered" evidence="4">
    <location>
        <begin position="955"/>
        <end position="1304"/>
    </location>
</feature>
<feature type="region of interest" description="Disordered" evidence="4">
    <location>
        <begin position="1316"/>
        <end position="1339"/>
    </location>
</feature>
<feature type="region of interest" description="Disordered" evidence="4">
    <location>
        <begin position="1367"/>
        <end position="1525"/>
    </location>
</feature>
<feature type="compositionally biased region" description="Low complexity" evidence="4">
    <location>
        <begin position="47"/>
        <end position="62"/>
    </location>
</feature>
<feature type="compositionally biased region" description="Gly residues" evidence="4">
    <location>
        <begin position="102"/>
        <end position="111"/>
    </location>
</feature>
<feature type="compositionally biased region" description="Pro residues" evidence="4">
    <location>
        <begin position="134"/>
        <end position="149"/>
    </location>
</feature>
<feature type="compositionally biased region" description="Basic and acidic residues" evidence="4">
    <location>
        <begin position="189"/>
        <end position="198"/>
    </location>
</feature>
<feature type="compositionally biased region" description="Low complexity" evidence="4">
    <location>
        <begin position="224"/>
        <end position="234"/>
    </location>
</feature>
<feature type="compositionally biased region" description="Basic and acidic residues" evidence="4">
    <location>
        <begin position="258"/>
        <end position="267"/>
    </location>
</feature>
<feature type="compositionally biased region" description="Gly residues" evidence="4">
    <location>
        <begin position="268"/>
        <end position="283"/>
    </location>
</feature>
<feature type="compositionally biased region" description="Pro residues" evidence="4">
    <location>
        <begin position="367"/>
        <end position="382"/>
    </location>
</feature>
<feature type="compositionally biased region" description="Gly residues" evidence="4">
    <location>
        <begin position="398"/>
        <end position="407"/>
    </location>
</feature>
<feature type="compositionally biased region" description="Low complexity" evidence="4">
    <location>
        <begin position="408"/>
        <end position="417"/>
    </location>
</feature>
<feature type="compositionally biased region" description="Low complexity" evidence="4">
    <location>
        <begin position="429"/>
        <end position="439"/>
    </location>
</feature>
<feature type="compositionally biased region" description="Basic and acidic residues" evidence="4">
    <location>
        <begin position="464"/>
        <end position="479"/>
    </location>
</feature>
<feature type="compositionally biased region" description="Low complexity" evidence="4">
    <location>
        <begin position="495"/>
        <end position="509"/>
    </location>
</feature>
<feature type="compositionally biased region" description="Low complexity" evidence="4">
    <location>
        <begin position="568"/>
        <end position="584"/>
    </location>
</feature>
<feature type="compositionally biased region" description="Pro residues" evidence="4">
    <location>
        <begin position="638"/>
        <end position="648"/>
    </location>
</feature>
<feature type="compositionally biased region" description="Gly residues" evidence="4">
    <location>
        <begin position="693"/>
        <end position="702"/>
    </location>
</feature>
<feature type="compositionally biased region" description="Gly residues" evidence="4">
    <location>
        <begin position="737"/>
        <end position="746"/>
    </location>
</feature>
<feature type="compositionally biased region" description="Gly residues" evidence="4">
    <location>
        <begin position="782"/>
        <end position="791"/>
    </location>
</feature>
<feature type="compositionally biased region" description="Low complexity" evidence="4">
    <location>
        <begin position="839"/>
        <end position="858"/>
    </location>
</feature>
<feature type="compositionally biased region" description="Gly residues" evidence="4">
    <location>
        <begin position="859"/>
        <end position="868"/>
    </location>
</feature>
<feature type="compositionally biased region" description="Low complexity" evidence="4">
    <location>
        <begin position="929"/>
        <end position="938"/>
    </location>
</feature>
<feature type="compositionally biased region" description="Gly residues" evidence="4">
    <location>
        <begin position="958"/>
        <end position="967"/>
    </location>
</feature>
<feature type="compositionally biased region" description="Low complexity" evidence="4">
    <location>
        <begin position="968"/>
        <end position="980"/>
    </location>
</feature>
<feature type="compositionally biased region" description="Gly residues" evidence="4">
    <location>
        <begin position="988"/>
        <end position="997"/>
    </location>
</feature>
<feature type="compositionally biased region" description="Low complexity" evidence="4">
    <location>
        <begin position="1040"/>
        <end position="1056"/>
    </location>
</feature>
<feature type="compositionally biased region" description="Gly residues" evidence="4">
    <location>
        <begin position="1194"/>
        <end position="1203"/>
    </location>
</feature>
<feature type="compositionally biased region" description="Low complexity" evidence="4">
    <location>
        <begin position="1237"/>
        <end position="1250"/>
    </location>
</feature>
<feature type="compositionally biased region" description="Gly residues" evidence="4">
    <location>
        <begin position="1251"/>
        <end position="1260"/>
    </location>
</feature>
<feature type="compositionally biased region" description="Gly residues" evidence="4">
    <location>
        <begin position="1373"/>
        <end position="1382"/>
    </location>
</feature>
<feature type="compositionally biased region" description="Low complexity" evidence="4">
    <location>
        <begin position="1413"/>
        <end position="1425"/>
    </location>
</feature>
<feature type="compositionally biased region" description="Low complexity" evidence="4">
    <location>
        <begin position="1433"/>
        <end position="1454"/>
    </location>
</feature>
<feature type="compositionally biased region" description="Gly residues" evidence="4">
    <location>
        <begin position="1492"/>
        <end position="1501"/>
    </location>
</feature>
<feature type="compositionally biased region" description="Gly residues" evidence="4">
    <location>
        <begin position="1507"/>
        <end position="1516"/>
    </location>
</feature>
<feature type="glycosylation site" description="O-linked (Xyl...) (glycosaminoglycan) serine" evidence="2">
    <location>
        <position position="248"/>
    </location>
</feature>
<feature type="disulfide bond" evidence="3">
    <location>
        <begin position="1546"/>
        <end position="1635"/>
    </location>
</feature>
<feature type="disulfide bond" evidence="3">
    <location>
        <begin position="1579"/>
        <end position="1632"/>
    </location>
</feature>
<feature type="disulfide bond" evidence="3">
    <location>
        <begin position="1591"/>
        <end position="1597"/>
    </location>
</feature>
<feature type="disulfide bond" evidence="3">
    <location>
        <begin position="1654"/>
        <end position="1750"/>
    </location>
</feature>
<feature type="disulfide bond" evidence="3">
    <location>
        <begin position="1688"/>
        <end position="1747"/>
    </location>
</feature>
<feature type="disulfide bond" evidence="3">
    <location>
        <begin position="1700"/>
        <end position="1707"/>
    </location>
</feature>
<feature type="splice variant" id="VSP_001160" description="In isoform b." evidence="12">
    <original>GDLGSVGPPGPPGPREFTGSGSIVGPRGNPGEKGDK</original>
    <variation>GDIGAMGPAGPPGPIASTMSKGTIIGPKGDLGEKGEK</variation>
    <location>
        <begin position="229"/>
        <end position="264"/>
    </location>
</feature>
<feature type="mutagenesis site" description="In MN114; 73% lethal." evidence="10">
    <original>G</original>
    <variation>E</variation>
    <location>
        <position position="48"/>
    </location>
</feature>
<feature type="mutagenesis site" description="In MN126; 100% lethal." evidence="10">
    <original>A</original>
    <variation>T</variation>
    <location>
        <position position="366"/>
    </location>
</feature>
<feature type="mutagenesis site" description="In ju1166; suppresses the lethal phenotypes of the pxn-2 tm3464 mutant." evidence="8">
    <original>E</original>
    <variation>K</variation>
    <location>
        <position position="479"/>
    </location>
</feature>
<feature type="mutagenesis site" description="In MN109; 37% lethal." evidence="10">
    <original>G</original>
    <variation>E</variation>
    <location>
        <position position="570"/>
    </location>
</feature>
<feature type="mutagenesis site" description="In ju1180; suppresses the lethal phenotypes of the pxn-2 tm3464 mutant." evidence="8">
    <original>P</original>
    <variation>L</variation>
    <location>
        <position position="587"/>
    </location>
</feature>
<feature type="mutagenesis site" description="In MN103 and MN151; 96% lethal." evidence="10">
    <original>G</original>
    <variation>R</variation>
    <location>
        <position position="588"/>
    </location>
</feature>
<feature type="mutagenesis site" description="In MN152; 50% lethal." evidence="10">
    <original>G</original>
    <variation>R</variation>
    <location>
        <position position="597"/>
    </location>
</feature>
<feature type="mutagenesis site" description="In MN129; 100% lethal." evidence="10">
    <original>G</original>
    <variation>E</variation>
    <location>
        <position position="690"/>
    </location>
</feature>
<feature type="mutagenesis site" description="In MN101; 100% lethal." evidence="10">
    <original>G</original>
    <variation>R</variation>
    <location>
        <position position="690"/>
    </location>
</feature>
<feature type="mutagenesis site" description="In MN143; 100% lethal." evidence="10">
    <original>G</original>
    <variation>E</variation>
    <location>
        <position position="737"/>
    </location>
</feature>
<feature type="mutagenesis site" description="In g30; temperature-sensitive mutant. At the restrictive temperature, causes 90 percent lethality. At the permissive temperature of 16 degrees Celsius, causes the formation of ectopic presynaptic boutons on the ventral cord axons." evidence="7 10">
    <original>G</original>
    <variation>R</variation>
    <location>
        <position position="877"/>
    </location>
</feature>
<feature type="mutagenesis site" description="In E1470; 94% lethal." evidence="10">
    <original>G</original>
    <variation>R</variation>
    <location>
        <position position="904"/>
    </location>
</feature>
<feature type="mutagenesis site" description="In MN139; 20% lethal." evidence="10">
    <original>G</original>
    <variation>E</variation>
    <location>
        <position position="1003"/>
    </location>
</feature>
<feature type="mutagenesis site" description="In g25; temperature-sensitive mutant. At the restrictive temperature of 25 degrees Celsius, causes 96 percent embryonic lethality. At the permissive temperature of 22.5 degrees Celsius, partially restores normal distal tip cell migration in a mig-17 (k174) mutant background." evidence="6 10">
    <original>G</original>
    <variation>D</variation>
    <location>
        <position position="1125"/>
    </location>
</feature>
<feature type="mutagenesis site" description="In MN147; 7% lethal." evidence="10">
    <original>G</original>
    <variation>D</variation>
    <location>
        <position position="1152"/>
    </location>
</feature>
<feature type="mutagenesis site" description="In g37 and b246; 9% lethal. Moderate reduction in basement membrane localization associated with a moderate accumulation in muscle cell cytoplasm. At the restrictive temperature of 25 degrees Celsius, causes a reduction of nid-1 recruitment to the gonad basement membrane. At the permissive temperature of 22.5 degrees Celsius, partially restores normal distal tip cell migration in a mig-17 (k174) mutant background." evidence="6 10">
    <original>G</original>
    <variation>D</variation>
    <location>
        <position position="1286"/>
    </location>
</feature>
<feature type="mutagenesis site" description="In k196; temperature-sensitive mutant. At the restrictive temperature of 25 degrees Celsius, causes 85 percent larval lethality. Slight reduction in basement membrane localization associated with a slight intracellular accumulation in muscle and distal tip cells (DTC). In a mig-17 (k174) mutant background, restores normal DTC migration and nid-1 basement membrane localization." evidence="6 10">
    <original>G</original>
    <variation>R</variation>
    <location>
        <position position="1465"/>
    </location>
</feature>
<feature type="mutagenesis site" description="In k193; temperature-sensitive mutant. At both the restrictive and permissive temperatures, causes 16-20 percent embryonic lethality. Slight reduction in basement membrane localization associated with a slight intracellular accumulation in muscle and distal tip cells (DTC). In a mig-17 (k174) mutant background, restores normal DTC migration and nid-1 basement membrane localization. Enhances the lethality of the pxn-2 mutant (ju432)." evidence="6 8 10">
    <original>S</original>
    <variation>L</variation>
    <location>
        <position position="1610"/>
    </location>
</feature>
<feature type="sequence conflict" description="In Ref. 2; CCD68907/CCD68906." evidence="12" ref="2">
    <original>E</original>
    <variation>D</variation>
    <location>
        <position position="1604"/>
    </location>
</feature>
<feature type="sequence conflict" description="In Ref. 2; CCD68907/CCD68906." evidence="12" ref="2">
    <original>P</original>
    <variation>L</variation>
    <location>
        <position position="1682"/>
    </location>
</feature>
<gene>
    <name evidence="13" type="primary">let-2</name>
    <name evidence="13" type="synonym">clb-1</name>
    <name evidence="13" type="ORF">F01G12.5</name>
</gene>
<dbReference type="EMBL" id="Z22964">
    <property type="protein sequence ID" value="CAA80536.1"/>
    <property type="molecule type" value="Genomic_DNA"/>
</dbReference>
<dbReference type="EMBL" id="Z22964">
    <property type="protein sequence ID" value="CAA80537.1"/>
    <property type="molecule type" value="Genomic_DNA"/>
</dbReference>
<dbReference type="EMBL" id="U22327">
    <property type="protein sequence ID" value="AAA64312.1"/>
    <property type="status" value="ALT_SEQ"/>
    <property type="molecule type" value="Genomic_DNA"/>
</dbReference>
<dbReference type="EMBL" id="BX284606">
    <property type="protein sequence ID" value="CCD68907.1"/>
    <property type="molecule type" value="Genomic_DNA"/>
</dbReference>
<dbReference type="EMBL" id="BX284606">
    <property type="protein sequence ID" value="CCD68906.1"/>
    <property type="molecule type" value="Genomic_DNA"/>
</dbReference>
<dbReference type="EMBL" id="J05066">
    <property type="protein sequence ID" value="AAA27989.1"/>
    <property type="molecule type" value="Genomic_DNA"/>
</dbReference>
<dbReference type="PIR" id="A34476">
    <property type="entry name" value="A34476"/>
</dbReference>
<dbReference type="PIR" id="T29350">
    <property type="entry name" value="T29350"/>
</dbReference>
<dbReference type="PIR" id="T29351">
    <property type="entry name" value="T29351"/>
</dbReference>
<dbReference type="RefSeq" id="NP_510663.1">
    <property type="nucleotide sequence ID" value="NM_078262.4"/>
</dbReference>
<dbReference type="RefSeq" id="NP_510664.1">
    <property type="nucleotide sequence ID" value="NM_078263.3"/>
</dbReference>
<dbReference type="SMR" id="P17140"/>
<dbReference type="BioGRID" id="46593">
    <property type="interactions" value="2"/>
</dbReference>
<dbReference type="FunCoup" id="P17140">
    <property type="interactions" value="10"/>
</dbReference>
<dbReference type="STRING" id="6239.F01G12.5b.1"/>
<dbReference type="GlyCosmos" id="P17140">
    <property type="glycosylation" value="1 site, No reported glycans"/>
</dbReference>
<dbReference type="PaxDb" id="6239-F01G12.5b.1"/>
<dbReference type="PeptideAtlas" id="P17140"/>
<dbReference type="EnsemblMetazoa" id="F01G12.5a.1">
    <property type="protein sequence ID" value="F01G12.5a.1"/>
    <property type="gene ID" value="WBGene00002280"/>
</dbReference>
<dbReference type="EnsemblMetazoa" id="F01G12.5b.1">
    <property type="protein sequence ID" value="F01G12.5b.1"/>
    <property type="gene ID" value="WBGene00002280"/>
</dbReference>
<dbReference type="GeneID" id="181708"/>
<dbReference type="KEGG" id="cel:CELE_F01G12.5"/>
<dbReference type="UCSC" id="F01G12.5b.1">
    <molecule id="P17140-1"/>
    <property type="organism name" value="c. elegans"/>
</dbReference>
<dbReference type="AGR" id="WB:WBGene00002280"/>
<dbReference type="CTD" id="181708"/>
<dbReference type="WormBase" id="F01G12.5a">
    <property type="protein sequence ID" value="CE04334"/>
    <property type="gene ID" value="WBGene00002280"/>
    <property type="gene designation" value="let-2"/>
</dbReference>
<dbReference type="WormBase" id="F01G12.5b">
    <property type="protein sequence ID" value="CE04335"/>
    <property type="gene ID" value="WBGene00002280"/>
    <property type="gene designation" value="let-2"/>
</dbReference>
<dbReference type="eggNOG" id="KOG3544">
    <property type="taxonomic scope" value="Eukaryota"/>
</dbReference>
<dbReference type="GeneTree" id="ENSGT00940000164076"/>
<dbReference type="HOGENOM" id="CLU_002023_1_0_1"/>
<dbReference type="InParanoid" id="P17140"/>
<dbReference type="OrthoDB" id="10071882at2759"/>
<dbReference type="PhylomeDB" id="P17140"/>
<dbReference type="Reactome" id="R-CEL-1650814">
    <property type="pathway name" value="Collagen biosynthesis and modifying enzymes"/>
</dbReference>
<dbReference type="Reactome" id="R-CEL-216083">
    <property type="pathway name" value="Integrin cell surface interactions"/>
</dbReference>
<dbReference type="PRO" id="PR:P17140"/>
<dbReference type="Proteomes" id="UP000001940">
    <property type="component" value="Chromosome X"/>
</dbReference>
<dbReference type="Bgee" id="WBGene00002280">
    <property type="expression patterns" value="Expressed in larva and 3 other cell types or tissues"/>
</dbReference>
<dbReference type="GO" id="GO:0005604">
    <property type="term" value="C:basement membrane"/>
    <property type="evidence" value="ECO:0000314"/>
    <property type="project" value="UniProtKB"/>
</dbReference>
<dbReference type="GO" id="GO:0005587">
    <property type="term" value="C:collagen type IV trimer"/>
    <property type="evidence" value="ECO:0000315"/>
    <property type="project" value="UniProtKB"/>
</dbReference>
<dbReference type="GO" id="GO:0062023">
    <property type="term" value="C:collagen-containing extracellular matrix"/>
    <property type="evidence" value="ECO:0000318"/>
    <property type="project" value="GO_Central"/>
</dbReference>
<dbReference type="GO" id="GO:0005615">
    <property type="term" value="C:extracellular space"/>
    <property type="evidence" value="ECO:0000318"/>
    <property type="project" value="GO_Central"/>
</dbReference>
<dbReference type="GO" id="GO:0005201">
    <property type="term" value="F:extracellular matrix structural constituent"/>
    <property type="evidence" value="ECO:0000314"/>
    <property type="project" value="WormBase"/>
</dbReference>
<dbReference type="GO" id="GO:0030020">
    <property type="term" value="F:extracellular matrix structural constituent conferring tensile strength"/>
    <property type="evidence" value="ECO:0000315"/>
    <property type="project" value="UniProtKB"/>
</dbReference>
<dbReference type="GO" id="GO:0016043">
    <property type="term" value="P:cellular component organization"/>
    <property type="evidence" value="ECO:0000303"/>
    <property type="project" value="UniProtKB"/>
</dbReference>
<dbReference type="GO" id="GO:0009792">
    <property type="term" value="P:embryo development ending in birth or egg hatching"/>
    <property type="evidence" value="ECO:0000315"/>
    <property type="project" value="WormBase"/>
</dbReference>
<dbReference type="GO" id="GO:0035262">
    <property type="term" value="P:gonad morphogenesis"/>
    <property type="evidence" value="ECO:0000316"/>
    <property type="project" value="UniProtKB"/>
</dbReference>
<dbReference type="GO" id="GO:0008104">
    <property type="term" value="P:protein localization"/>
    <property type="evidence" value="ECO:0000315"/>
    <property type="project" value="UniProtKB"/>
</dbReference>
<dbReference type="GO" id="GO:1903354">
    <property type="term" value="P:regulation of distal tip cell migration"/>
    <property type="evidence" value="ECO:0000316"/>
    <property type="project" value="UniProtKB"/>
</dbReference>
<dbReference type="FunFam" id="2.170.240.10:FF:000001">
    <property type="entry name" value="Collagen IV alpha 1 chain"/>
    <property type="match status" value="1"/>
</dbReference>
<dbReference type="Gene3D" id="2.170.240.10">
    <property type="entry name" value="Collagen IV, non-collagenous"/>
    <property type="match status" value="1"/>
</dbReference>
<dbReference type="InterPro" id="IPR008160">
    <property type="entry name" value="Collagen"/>
</dbReference>
<dbReference type="InterPro" id="IPR001442">
    <property type="entry name" value="Collagen_IV_NC"/>
</dbReference>
<dbReference type="InterPro" id="IPR036954">
    <property type="entry name" value="Collagen_IV_NC_sf"/>
</dbReference>
<dbReference type="InterPro" id="IPR050149">
    <property type="entry name" value="Collagen_superfamily"/>
</dbReference>
<dbReference type="InterPro" id="IPR016187">
    <property type="entry name" value="CTDL_fold"/>
</dbReference>
<dbReference type="PANTHER" id="PTHR24023:SF1112">
    <property type="entry name" value="COL_CUTICLE_N DOMAIN-CONTAINING PROTEIN-RELATED"/>
    <property type="match status" value="1"/>
</dbReference>
<dbReference type="PANTHER" id="PTHR24023">
    <property type="entry name" value="COLLAGEN ALPHA"/>
    <property type="match status" value="1"/>
</dbReference>
<dbReference type="Pfam" id="PF01413">
    <property type="entry name" value="C4"/>
    <property type="match status" value="2"/>
</dbReference>
<dbReference type="Pfam" id="PF01391">
    <property type="entry name" value="Collagen"/>
    <property type="match status" value="19"/>
</dbReference>
<dbReference type="SMART" id="SM00111">
    <property type="entry name" value="C4"/>
    <property type="match status" value="2"/>
</dbReference>
<dbReference type="SUPFAM" id="SSF56436">
    <property type="entry name" value="C-type lectin-like"/>
    <property type="match status" value="2"/>
</dbReference>
<dbReference type="PROSITE" id="PS51403">
    <property type="entry name" value="NC1_IV"/>
    <property type="match status" value="1"/>
</dbReference>
<evidence type="ECO:0000250" key="1"/>
<evidence type="ECO:0000255" key="2"/>
<evidence type="ECO:0000255" key="3">
    <source>
        <dbReference type="PROSITE-ProRule" id="PRU00736"/>
    </source>
</evidence>
<evidence type="ECO:0000256" key="4">
    <source>
        <dbReference type="SAM" id="MobiDB-lite"/>
    </source>
</evidence>
<evidence type="ECO:0000269" key="5">
    <source>
    </source>
</evidence>
<evidence type="ECO:0000269" key="6">
    <source>
    </source>
</evidence>
<evidence type="ECO:0000269" key="7">
    <source>
    </source>
</evidence>
<evidence type="ECO:0000269" key="8">
    <source>
    </source>
</evidence>
<evidence type="ECO:0000269" key="9">
    <source>
    </source>
</evidence>
<evidence type="ECO:0000269" key="10">
    <source>
    </source>
</evidence>
<evidence type="ECO:0000303" key="11">
    <source>
    </source>
</evidence>
<evidence type="ECO:0000305" key="12"/>
<evidence type="ECO:0000312" key="13">
    <source>
        <dbReference type="WormBase" id="F01G12.5a"/>
    </source>
</evidence>
<evidence type="ECO:0000312" key="14">
    <source>
        <dbReference type="WormBase" id="F01G12.5b"/>
    </source>
</evidence>
<comment type="function">
    <text evidence="6 7 9 10 12">Collagen type IV is specific for basement membranes (Probable). Together with fbl-1 and downstream of metalloprotease mig-17, recruits nidogen nid-1 to the gonad basement membrane thereby probably inducing basement membrane remodeling required for the directional migration of distal tip cells (PubMed:19104038). Required to restrict presynaptic growth at the neuromuscular junctions in late larval stage and in adult motor neurons (PubMed:25080592). Vital for embryonic development (PubMed:7691828, PubMed:8045258).</text>
</comment>
<comment type="subunit">
    <text>Trimers of two alpha 1(IV) and one alpha 2(IV) chain. Type IV collagen forms a mesh-like network linked through intermolecular interactions between 7S domains and between NC1 domains.</text>
</comment>
<comment type="subcellular location">
    <subcellularLocation>
        <location evidence="3 6">Secreted</location>
        <location evidence="3 6">Extracellular space</location>
        <location evidence="3 6">Extracellular matrix</location>
        <location evidence="3 6">Basement membrane</location>
    </subcellularLocation>
</comment>
<comment type="alternative products">
    <event type="alternative splicing"/>
    <isoform>
        <id>P17140-1</id>
        <name evidence="13">a</name>
        <name evidence="11">I</name>
        <sequence type="displayed"/>
    </isoform>
    <isoform>
        <id>P17140-2</id>
        <name evidence="14">b</name>
        <name evidence="11">II</name>
        <sequence type="described" ref="VSP_001160"/>
    </isoform>
    <text evidence="12">Exons 9 and 10 are mutually exclusive splicing exons. There is alternative usage of either exon 9 (isoform a) or exon 10 (isoform b).</text>
</comment>
<comment type="tissue specificity">
    <text evidence="6">Localizes to the basement membrane between distal tip cells and the germline. Localizes to the intestinal basement membrane.</text>
</comment>
<comment type="developmental stage">
    <text evidence="5 9">Alternatively spliced, in part by RNA-binding protein asd-2, to produce isoforms which are expressed at different developmental stages (PubMed:18230701). Isoform a: Predominantly expressed in embryos (PubMed:18230701, PubMed:7691828). Isoform b: Predominantly expressed in larvae and adults (PubMed:18230701, PubMed:7691828).</text>
</comment>
<comment type="domain">
    <text evidence="3">Alpha chains of type IV collagen have a non-collagenous domain (NC1) at their C-terminus, frequent interruptions of the G-X-Y repeats in the long central triple-helical domain (which may cause flexibility in the triple helix), and a short N-terminal triple-helical 7S domain.</text>
</comment>
<comment type="PTM">
    <text evidence="3">Prolines at the third position of the tripeptide repeating unit (G-X-Y) are hydroxylated in some or all of the chains.</text>
</comment>
<comment type="PTM">
    <text evidence="3">Type IV collagens contain numerous cysteine residues which are involved in inter- and intramolecular disulfide bonding. 12 of these, located in the NC1 domain, are conserved in all known type IV collagens.</text>
</comment>
<comment type="PTM">
    <text evidence="1">The trimeric structure of the NC1 domains is stabilized by covalent bonds between Lys and Met residues.</text>
</comment>
<comment type="similarity">
    <text evidence="3">Belongs to the type IV collagen family.</text>
</comment>
<comment type="sequence caution" evidence="12">
    <conflict type="miscellaneous discrepancy">
        <sequence resource="EMBL-CDS" id="AAA64312"/>
    </conflict>
    <text>Intron retention.</text>
</comment>
<accession>P17140</accession>
<accession>Q19098</accession>
<accession>Q19099</accession>
<sequence>MKQRAALGPVLRLAILALLAVSYVQSQATCRDCSNRGCFCVGEKGSMGAPGPQGPPGTQGIRGFPGPEGLAGPKGLKGAQGPPGPVGIKGDRGAVGVPGFPGNDGGNGRPGEPGPPGAPGWDGCNGTDGAPGIPGRPGPPGMPGFPGPPGMDGLKGEPAIGYAGAPGEKGDGGMPGMPGLPGPSGRDGYPGEKGDRGDTGNAGPRGPPGEAGSPGNPGIGSIGPKGDPGDLGSVGPPGPPGPREFTGSGSIVGPRGNPGEKGDKGEPGEGGQRGYPGNGGLSGQPGLPGMKGEKGLSGPAGPRGKEGRPGNAGPPGFKGDRGLDGLGGIPGLPGQKGEAGYPGRDGPKGNSGPPGPPGGGTFNDGAPGPPGLPGRPGNPGPPGTDGYPGAPGPAGPIGNTGGPGLPGYPGNEGLPGPKGDKGDGGIPGAPGVSGPSGIPGLPGPKGEPGYRGTPGQSIPGLPGKDGKPGLDGAPGRKGENGLPGVRGPPGDSLNGLPGAPGQRGAPGPNGYDGRDGVNGLPGAPGTKGDRGGTCSACAPGTKGEKGLPGYSGQPGPQGDRGLPGMPGPVGDAGDDGLPGPAGRPGSPGPPGQDGFPGLPGQKGEPTQLTLRPGPPGYPGLKGENGFPGQPGVDGLPGPSGPVGPPGAPGYPGEKGDAGLPGLSGKPGQDGLPGLPGNKGEAGYGQPGQPGFPGAKGDGGLPGLPGTPGLQGMPGEPAPENQVNPAPPGQPGLPGLPGTKGEGGYPGRPGEVGQPGFPGLPGMKGDSGLPGPPGLPGHPGVPGDKGFGGVPGLPGIPGPKGDVGNPGLPGLNGQKGEPGVGVPGQPGSPGFPGLKGDAGLPGLPGTPGLEGQRGFPGAPGLKGGDGLPGLSGQPGYPGEKGDAGLPGVPGREGSPGFPGQDGLPGVPGMKGEDGLPGLPGVTGLKGDLGAPGQSGAPGLPGAPGYPGMKGNAGIPGVPGFKGDGGLPGLPGLNGPKGEPGVPGMPGTPGMKGNGGLPGLPGRDGLSGVPGMKGDRGFNGLPGEKGEAGPAARDGQKGDAGLPGQPGLRGPQGPSGLPGVPGFKGETGLPGYGQPGQPGEKGLPGIPGKAGRQGAPGSPGQDGLPGFPGMKGESGYPGQDGLPGRDGLPGVPGQKGDLGQSGQPGLSGAPGLDGQPGVPGIRGDKGQGGLPGIPGDRGMDGYPGQKGENGYPGQPGLPGLGGEKGFAGTPGFPGLKGSPGYPGQDGLPGIPGLKGDSGFPGQPGQEGLPGLSGEKGMGGLPGMPGQPGQSIAGPVGPPGAPGLQGKDGFPGLPGQKGESGLSGLPGAPGLKGESGMPGFPGAKGDLGANGIPGKRGEDGLPGVPGRDGQPGIPGLKGEVGGAGLPGQPGFPGIPGLKGEGGLPGFPGAKGEAGFPGTPGVPGYAGEKGDGGLPGLPGRDGLPGADGPVGPPGPSGPQNLVEPGEKGLPGLPGAPGLRGEKGMPGLDGPPGNDGPPGLPGQRGNDGYPGAPGLSGEKGMGGLPGFPGLDGQPGGPGAPGLPGAPGAAGPAYRDGFVLVKHSQTTEVPRCPEGQTKLWDGYSLLYIEGNEKSHNQDLGHAGSCLQRFSTMPFLFCDFNNVCNYASRNEKSYWLSTSEAIPMMPVNEREIEPYISRCAVCEAPANTIAVHSQTIQIPNCPAGWSSLWIGYSFAMHTGAGAEGGGQSPSSPGSCLEDFRATPFIECNGARGSCHYFANKFSFWLTTIDNDSEFKVPESQTLKSGNLRTRVSRCQVCVKSTDGRH</sequence>
<proteinExistence type="evidence at protein level"/>
<reference key="1">
    <citation type="journal article" date="1993" name="J. Cell Biol.">
        <title>Genetic identification, sequence, and alternative splicing of the Caenorhabditis elegans alpha 2(IV) collagen gene.</title>
        <authorList>
            <person name="Sibley M.H."/>
            <person name="Johnson J.J."/>
            <person name="Mello C.C."/>
            <person name="Kramer J.M."/>
        </authorList>
    </citation>
    <scope>NUCLEOTIDE SEQUENCE [GENOMIC DNA]</scope>
    <scope>ALTERNATIVE SPLICING</scope>
    <scope>FUNCTION</scope>
    <scope>DEVELOPMENTAL STAGE</scope>
    <source>
        <strain>Bristol N2</strain>
    </source>
</reference>
<reference key="2">
    <citation type="journal article" date="1998" name="Science">
        <title>Genome sequence of the nematode C. elegans: a platform for investigating biology.</title>
        <authorList>
            <consortium name="The C. elegans sequencing consortium"/>
        </authorList>
    </citation>
    <scope>NUCLEOTIDE SEQUENCE [LARGE SCALE GENOMIC DNA]</scope>
    <source>
        <strain>Bristol N2</strain>
    </source>
</reference>
<reference key="3">
    <citation type="journal article" date="1989" name="J. Biol. Chem.">
        <title>The two Caenorhabditis elegans basement membrane (type IV) collagen genes are located on separate chromosomes.</title>
        <authorList>
            <person name="Guo X."/>
            <person name="Kramer J.M."/>
        </authorList>
    </citation>
    <scope>PRELIMINARY NUCLEOTIDE SEQUENCE [GENOMIC DNA] OF 1495-1758</scope>
    <source>
        <strain>Bristol N2</strain>
    </source>
</reference>
<reference key="4">
    <citation type="journal article" date="1994" name="EMBO J.">
        <title>Mutations in the alpha 2(IV) basement membrane collagen gene of Caenorhabditis elegans produce phenotypes of differing severities.</title>
        <authorList>
            <person name="Sibley M.H."/>
            <person name="Graham P.L."/>
            <person name="von Mende N."/>
            <person name="Kramer J.M."/>
        </authorList>
    </citation>
    <scope>FUNCTION</scope>
    <scope>MUTAGENESIS</scope>
</reference>
<reference key="5">
    <citation type="journal article" date="2008" name="Genes Dev.">
        <title>STAR family RNA-binding protein ASD-2 regulates developmental switching of mutually exclusive alternative splicing in vivo.</title>
        <authorList>
            <person name="Ohno G."/>
            <person name="Hagiwara M."/>
            <person name="Kuroyanagi H."/>
        </authorList>
    </citation>
    <scope>ALTERNATIVE SPLICING</scope>
    <scope>DEVELOPMENTAL STAGE</scope>
</reference>
<reference key="6">
    <citation type="journal article" date="2008" name="Proc. Natl. Acad. Sci. U.S.A.">
        <title>MIG-17/ADAMTS controls cell migration by recruiting nidogen to the basement membrane in C. elegans.</title>
        <authorList>
            <person name="Kubota Y."/>
            <person name="Ohkura K."/>
            <person name="Tamai K.K."/>
            <person name="Nagata K."/>
            <person name="Nishiwaki K."/>
        </authorList>
    </citation>
    <scope>FUNCTION</scope>
    <scope>SUBCELLULAR LOCATION</scope>
    <scope>TISSUE SPECIFICITY</scope>
    <scope>MUTAGENESIS OF GLY-1125; GLY-1286; GLY-1465 AND SER-1610</scope>
</reference>
<reference key="7">
    <citation type="journal article" date="2014" name="J. Neurosci.">
        <title>Perlecan antagonizes collagen IV and ADAMTS9/GON-1 in restricting the growth of presynaptic boutons.</title>
        <authorList>
            <person name="Qin J."/>
            <person name="Liang J."/>
            <person name="Ding M."/>
        </authorList>
    </citation>
    <scope>FUNCTION</scope>
    <scope>MUTAGENESIS OF GLY-877</scope>
</reference>
<reference key="8">
    <citation type="journal article" date="2018" name="Genetics">
        <title>Genetic Suppression of Basement Membrane Defects in Caenorhabditis elegans by Gain of Function in Extracellular Matrix and Cell-Matrix Attachment Genes.</title>
        <authorList>
            <person name="Gotenstein J.R."/>
            <person name="Koo C.C."/>
            <person name="Ho T.W."/>
            <person name="Chisholm A.D."/>
        </authorList>
    </citation>
    <scope>MUTAGENESIS OF GLU-479; PRO-587 AND SER-1610</scope>
</reference>
<protein>
    <recommendedName>
        <fullName>Collagen alpha-2(IV) chain</fullName>
    </recommendedName>
    <alternativeName>
        <fullName>Lethal protein 2</fullName>
    </alternativeName>
</protein>
<name>CO4A2_CAEEL</name>
<organism>
    <name type="scientific">Caenorhabditis elegans</name>
    <dbReference type="NCBI Taxonomy" id="6239"/>
    <lineage>
        <taxon>Eukaryota</taxon>
        <taxon>Metazoa</taxon>
        <taxon>Ecdysozoa</taxon>
        <taxon>Nematoda</taxon>
        <taxon>Chromadorea</taxon>
        <taxon>Rhabditida</taxon>
        <taxon>Rhabditina</taxon>
        <taxon>Rhabditomorpha</taxon>
        <taxon>Rhabditoidea</taxon>
        <taxon>Rhabditidae</taxon>
        <taxon>Peloderinae</taxon>
        <taxon>Caenorhabditis</taxon>
    </lineage>
</organism>
<keyword id="KW-0025">Alternative splicing</keyword>
<keyword id="KW-0084">Basement membrane</keyword>
<keyword id="KW-0176">Collagen</keyword>
<keyword id="KW-1015">Disulfide bond</keyword>
<keyword id="KW-0272">Extracellular matrix</keyword>
<keyword id="KW-0325">Glycoprotein</keyword>
<keyword id="KW-0379">Hydroxylation</keyword>
<keyword id="KW-0654">Proteoglycan</keyword>
<keyword id="KW-1185">Reference proteome</keyword>
<keyword id="KW-0677">Repeat</keyword>
<keyword id="KW-0964">Secreted</keyword>
<keyword id="KW-0732">Signal</keyword>